<accession>Q5JHP1</accession>
<protein>
    <recommendedName>
        <fullName evidence="1">Replication factor C large subunit</fullName>
        <shortName evidence="1">RFC large subunit</shortName>
    </recommendedName>
    <alternativeName>
        <fullName evidence="1">Clamp loader large subunit</fullName>
    </alternativeName>
</protein>
<keyword id="KW-0067">ATP-binding</keyword>
<keyword id="KW-0903">Direct protein sequencing</keyword>
<keyword id="KW-0235">DNA replication</keyword>
<keyword id="KW-0547">Nucleotide-binding</keyword>
<keyword id="KW-1185">Reference proteome</keyword>
<dbReference type="EMBL" id="AP006878">
    <property type="protein sequence ID" value="BAD86408.1"/>
    <property type="molecule type" value="Genomic_DNA"/>
</dbReference>
<dbReference type="RefSeq" id="WP_011251169.1">
    <property type="nucleotide sequence ID" value="NC_006624.1"/>
</dbReference>
<dbReference type="SMR" id="Q5JHP1"/>
<dbReference type="FunCoup" id="Q5JHP1">
    <property type="interactions" value="15"/>
</dbReference>
<dbReference type="STRING" id="69014.TK2219"/>
<dbReference type="EnsemblBacteria" id="BAD86408">
    <property type="protein sequence ID" value="BAD86408"/>
    <property type="gene ID" value="TK2219"/>
</dbReference>
<dbReference type="GeneID" id="78448759"/>
<dbReference type="KEGG" id="tko:TK2219"/>
<dbReference type="PATRIC" id="fig|69014.16.peg.2175"/>
<dbReference type="eggNOG" id="arCOG00470">
    <property type="taxonomic scope" value="Archaea"/>
</dbReference>
<dbReference type="HOGENOM" id="CLU_027255_1_1_2"/>
<dbReference type="InParanoid" id="Q5JHP1"/>
<dbReference type="OrthoDB" id="8658at2157"/>
<dbReference type="PhylomeDB" id="Q5JHP1"/>
<dbReference type="Proteomes" id="UP000000536">
    <property type="component" value="Chromosome"/>
</dbReference>
<dbReference type="GO" id="GO:0005524">
    <property type="term" value="F:ATP binding"/>
    <property type="evidence" value="ECO:0007669"/>
    <property type="project" value="UniProtKB-UniRule"/>
</dbReference>
<dbReference type="GO" id="GO:0016887">
    <property type="term" value="F:ATP hydrolysis activity"/>
    <property type="evidence" value="ECO:0007669"/>
    <property type="project" value="InterPro"/>
</dbReference>
<dbReference type="GO" id="GO:0003689">
    <property type="term" value="F:DNA clamp loader activity"/>
    <property type="evidence" value="ECO:0007669"/>
    <property type="project" value="UniProtKB-UniRule"/>
</dbReference>
<dbReference type="GO" id="GO:0006260">
    <property type="term" value="P:DNA replication"/>
    <property type="evidence" value="ECO:0007669"/>
    <property type="project" value="UniProtKB-UniRule"/>
</dbReference>
<dbReference type="CDD" id="cd00009">
    <property type="entry name" value="AAA"/>
    <property type="match status" value="1"/>
</dbReference>
<dbReference type="CDD" id="cd18140">
    <property type="entry name" value="HLD_clamp_RFC"/>
    <property type="match status" value="1"/>
</dbReference>
<dbReference type="Gene3D" id="1.10.8.60">
    <property type="match status" value="1"/>
</dbReference>
<dbReference type="Gene3D" id="3.40.50.300">
    <property type="entry name" value="P-loop containing nucleotide triphosphate hydrolases"/>
    <property type="match status" value="1"/>
</dbReference>
<dbReference type="HAMAP" id="MF_01508">
    <property type="entry name" value="RfcL"/>
    <property type="match status" value="1"/>
</dbReference>
<dbReference type="InterPro" id="IPR003593">
    <property type="entry name" value="AAA+_ATPase"/>
</dbReference>
<dbReference type="InterPro" id="IPR003959">
    <property type="entry name" value="ATPase_AAA_core"/>
</dbReference>
<dbReference type="InterPro" id="IPR027417">
    <property type="entry name" value="P-loop_NTPase"/>
</dbReference>
<dbReference type="InterPro" id="IPR023935">
    <property type="entry name" value="Rep_factor-C_lsu"/>
</dbReference>
<dbReference type="InterPro" id="IPR047854">
    <property type="entry name" value="RFC_lid"/>
</dbReference>
<dbReference type="NCBIfam" id="NF003227">
    <property type="entry name" value="PRK04195.1-2"/>
    <property type="match status" value="1"/>
</dbReference>
<dbReference type="NCBIfam" id="NF003229">
    <property type="entry name" value="PRK04195.1-5"/>
    <property type="match status" value="1"/>
</dbReference>
<dbReference type="PANTHER" id="PTHR23389">
    <property type="entry name" value="CHROMOSOME TRANSMISSION FIDELITY FACTOR 18"/>
    <property type="match status" value="1"/>
</dbReference>
<dbReference type="PANTHER" id="PTHR23389:SF6">
    <property type="entry name" value="REPLICATION FACTOR C SUBUNIT 1"/>
    <property type="match status" value="1"/>
</dbReference>
<dbReference type="Pfam" id="PF00004">
    <property type="entry name" value="AAA"/>
    <property type="match status" value="1"/>
</dbReference>
<dbReference type="Pfam" id="PF21960">
    <property type="entry name" value="RCF1-5-like_lid"/>
    <property type="match status" value="1"/>
</dbReference>
<dbReference type="SMART" id="SM00382">
    <property type="entry name" value="AAA"/>
    <property type="match status" value="1"/>
</dbReference>
<dbReference type="SUPFAM" id="SSF52540">
    <property type="entry name" value="P-loop containing nucleoside triphosphate hydrolases"/>
    <property type="match status" value="1"/>
</dbReference>
<name>RFCL_THEKO</name>
<gene>
    <name evidence="1" type="primary">rfcL</name>
    <name type="ordered locus">TK2219</name>
</gene>
<sequence>MTEVPWVEKYRPRKLSEIVNQEKALEQVRAWVEAWLHGNPPKKKALLLAGPPGVGKTTTVYALANEYGFEVIELNASDERTYEKIERYVQAAYTMDILGKRRKLIFLDEADNIEPSGAREIAKLIDKARNPIIMSANHYWEVPREIRNKAQIVEYKRLTQRDIIKALVRILKREGLEVPKEVLYEIAKRANGDLRAAVNDLQTVVTGGVEDAVEVLAYRDTEKSVFQALAQLFATDNAKRAKLAVLGVDMMPNELLQWIDENVPYVYYRPEDIARAYEALSRADIYLGRAQRTGNYGLWKYATDMMTAGVAVAGIKKKGFVKIYPPKTIKLLTESKEERSLRDSVIKKIMSEMHMAKLEAIETLRYLRVIFENNPDLAAHFVVFLDLSEKEVEFITGDKEKAKTIWAKSMNIEKKLKKEGELEARAKEAERRVEAAEEEETMEAGEPEEELEEVEEEELTEEELEEAEEEIETVGKKEKPEKEKTKKGKQATLFDFLKK</sequence>
<proteinExistence type="evidence at protein level"/>
<reference key="1">
    <citation type="journal article" date="2005" name="Genome Res.">
        <title>Complete genome sequence of the hyperthermophilic archaeon Thermococcus kodakaraensis KOD1 and comparison with Pyrococcus genomes.</title>
        <authorList>
            <person name="Fukui T."/>
            <person name="Atomi H."/>
            <person name="Kanai T."/>
            <person name="Matsumi R."/>
            <person name="Fujiwara S."/>
            <person name="Imanaka T."/>
        </authorList>
    </citation>
    <scope>NUCLEOTIDE SEQUENCE [LARGE SCALE GENOMIC DNA]</scope>
    <source>
        <strain>ATCC BAA-918 / JCM 12380 / KOD1</strain>
    </source>
</reference>
<reference key="2">
    <citation type="journal article" date="2003" name="Biosci. Biotechnol. Biochem.">
        <title>Gene cloning and function analysis of replication factor C from Thermococcus kodakaraensis KOD1.</title>
        <authorList>
            <person name="Kitabayashi M."/>
            <person name="Nishiya Y."/>
            <person name="Esaka M."/>
            <person name="Itakura M."/>
            <person name="Imanaka T."/>
        </authorList>
    </citation>
    <scope>PROTEIN SEQUENCE OF 1-6</scope>
    <scope>FUNCTION</scope>
    <source>
        <strain>ATCC BAA-918 / JCM 12380 / KOD1</strain>
    </source>
</reference>
<feature type="chain" id="PRO_0000135964" description="Replication factor C large subunit">
    <location>
        <begin position="1"/>
        <end position="499"/>
    </location>
</feature>
<feature type="region of interest" description="Disordered" evidence="2">
    <location>
        <begin position="428"/>
        <end position="499"/>
    </location>
</feature>
<feature type="compositionally biased region" description="Acidic residues" evidence="2">
    <location>
        <begin position="436"/>
        <end position="472"/>
    </location>
</feature>
<feature type="compositionally biased region" description="Basic and acidic residues" evidence="2">
    <location>
        <begin position="473"/>
        <end position="484"/>
    </location>
</feature>
<feature type="binding site" evidence="1">
    <location>
        <begin position="50"/>
        <end position="57"/>
    </location>
    <ligand>
        <name>ATP</name>
        <dbReference type="ChEBI" id="CHEBI:30616"/>
    </ligand>
</feature>
<organism>
    <name type="scientific">Thermococcus kodakarensis (strain ATCC BAA-918 / JCM 12380 / KOD1)</name>
    <name type="common">Pyrococcus kodakaraensis (strain KOD1)</name>
    <dbReference type="NCBI Taxonomy" id="69014"/>
    <lineage>
        <taxon>Archaea</taxon>
        <taxon>Methanobacteriati</taxon>
        <taxon>Methanobacteriota</taxon>
        <taxon>Thermococci</taxon>
        <taxon>Thermococcales</taxon>
        <taxon>Thermococcaceae</taxon>
        <taxon>Thermococcus</taxon>
    </lineage>
</organism>
<evidence type="ECO:0000255" key="1">
    <source>
        <dbReference type="HAMAP-Rule" id="MF_01508"/>
    </source>
</evidence>
<evidence type="ECO:0000256" key="2">
    <source>
        <dbReference type="SAM" id="MobiDB-lite"/>
    </source>
</evidence>
<evidence type="ECO:0000305" key="3">
    <source>
    </source>
</evidence>
<comment type="function">
    <text evidence="3">Part of the RFC clamp loader complex which loads the PCNA sliding clamp onto DNA.</text>
</comment>
<comment type="subunit">
    <text evidence="1">Heteromultimer composed of small subunits (RfcS) and large subunits (RfcL).</text>
</comment>
<comment type="similarity">
    <text evidence="1">Belongs to the activator 1 small subunits family. RfcL subfamily.</text>
</comment>